<feature type="chain" id="PRO_1000141230" description="Small ribosomal subunit protein uS13">
    <location>
        <begin position="1"/>
        <end position="121"/>
    </location>
</feature>
<feature type="region of interest" description="Disordered" evidence="2">
    <location>
        <begin position="92"/>
        <end position="121"/>
    </location>
</feature>
<name>RS13_BURO0</name>
<keyword id="KW-0687">Ribonucleoprotein</keyword>
<keyword id="KW-0689">Ribosomal protein</keyword>
<keyword id="KW-0694">RNA-binding</keyword>
<keyword id="KW-0699">rRNA-binding</keyword>
<keyword id="KW-0820">tRNA-binding</keyword>
<reference key="1">
    <citation type="submission" date="2008-02" db="EMBL/GenBank/DDBJ databases">
        <title>Complete sequence of chromosome 1 of Burkholderia cenocepacia MC0-3.</title>
        <authorList>
            <person name="Copeland A."/>
            <person name="Lucas S."/>
            <person name="Lapidus A."/>
            <person name="Barry K."/>
            <person name="Bruce D."/>
            <person name="Goodwin L."/>
            <person name="Glavina del Rio T."/>
            <person name="Dalin E."/>
            <person name="Tice H."/>
            <person name="Pitluck S."/>
            <person name="Chain P."/>
            <person name="Malfatti S."/>
            <person name="Shin M."/>
            <person name="Vergez L."/>
            <person name="Schmutz J."/>
            <person name="Larimer F."/>
            <person name="Land M."/>
            <person name="Hauser L."/>
            <person name="Kyrpides N."/>
            <person name="Mikhailova N."/>
            <person name="Tiedje J."/>
            <person name="Richardson P."/>
        </authorList>
    </citation>
    <scope>NUCLEOTIDE SEQUENCE [LARGE SCALE GENOMIC DNA]</scope>
    <source>
        <strain>MC0-3</strain>
    </source>
</reference>
<protein>
    <recommendedName>
        <fullName evidence="1">Small ribosomal subunit protein uS13</fullName>
    </recommendedName>
    <alternativeName>
        <fullName evidence="3">30S ribosomal protein S13</fullName>
    </alternativeName>
</protein>
<comment type="function">
    <text evidence="1">Located at the top of the head of the 30S subunit, it contacts several helices of the 16S rRNA. In the 70S ribosome it contacts the 23S rRNA (bridge B1a) and protein L5 of the 50S subunit (bridge B1b), connecting the 2 subunits; these bridges are implicated in subunit movement. Contacts the tRNAs in the A and P-sites.</text>
</comment>
<comment type="subunit">
    <text evidence="1">Part of the 30S ribosomal subunit. Forms a loose heterodimer with protein S19. Forms two bridges to the 50S subunit in the 70S ribosome.</text>
</comment>
<comment type="similarity">
    <text evidence="1">Belongs to the universal ribosomal protein uS13 family.</text>
</comment>
<accession>B1JU45</accession>
<dbReference type="EMBL" id="CP000958">
    <property type="protein sequence ID" value="ACA89530.1"/>
    <property type="molecule type" value="Genomic_DNA"/>
</dbReference>
<dbReference type="RefSeq" id="WP_006477178.1">
    <property type="nucleotide sequence ID" value="NC_010508.1"/>
</dbReference>
<dbReference type="SMR" id="B1JU45"/>
<dbReference type="GeneID" id="93193428"/>
<dbReference type="KEGG" id="bcm:Bcenmc03_0350"/>
<dbReference type="HOGENOM" id="CLU_103849_1_2_4"/>
<dbReference type="Proteomes" id="UP000002169">
    <property type="component" value="Chromosome 1"/>
</dbReference>
<dbReference type="GO" id="GO:0005829">
    <property type="term" value="C:cytosol"/>
    <property type="evidence" value="ECO:0007669"/>
    <property type="project" value="TreeGrafter"/>
</dbReference>
<dbReference type="GO" id="GO:0015935">
    <property type="term" value="C:small ribosomal subunit"/>
    <property type="evidence" value="ECO:0007669"/>
    <property type="project" value="TreeGrafter"/>
</dbReference>
<dbReference type="GO" id="GO:0019843">
    <property type="term" value="F:rRNA binding"/>
    <property type="evidence" value="ECO:0007669"/>
    <property type="project" value="UniProtKB-UniRule"/>
</dbReference>
<dbReference type="GO" id="GO:0003735">
    <property type="term" value="F:structural constituent of ribosome"/>
    <property type="evidence" value="ECO:0007669"/>
    <property type="project" value="InterPro"/>
</dbReference>
<dbReference type="GO" id="GO:0000049">
    <property type="term" value="F:tRNA binding"/>
    <property type="evidence" value="ECO:0007669"/>
    <property type="project" value="UniProtKB-UniRule"/>
</dbReference>
<dbReference type="GO" id="GO:0006412">
    <property type="term" value="P:translation"/>
    <property type="evidence" value="ECO:0007669"/>
    <property type="project" value="UniProtKB-UniRule"/>
</dbReference>
<dbReference type="FunFam" id="1.10.8.50:FF:000001">
    <property type="entry name" value="30S ribosomal protein S13"/>
    <property type="match status" value="1"/>
</dbReference>
<dbReference type="FunFam" id="4.10.910.10:FF:000001">
    <property type="entry name" value="30S ribosomal protein S13"/>
    <property type="match status" value="1"/>
</dbReference>
<dbReference type="Gene3D" id="1.10.8.50">
    <property type="match status" value="1"/>
</dbReference>
<dbReference type="Gene3D" id="4.10.910.10">
    <property type="entry name" value="30s ribosomal protein s13, domain 2"/>
    <property type="match status" value="1"/>
</dbReference>
<dbReference type="HAMAP" id="MF_01315">
    <property type="entry name" value="Ribosomal_uS13"/>
    <property type="match status" value="1"/>
</dbReference>
<dbReference type="InterPro" id="IPR027437">
    <property type="entry name" value="Rbsml_uS13_C"/>
</dbReference>
<dbReference type="InterPro" id="IPR001892">
    <property type="entry name" value="Ribosomal_uS13"/>
</dbReference>
<dbReference type="InterPro" id="IPR010979">
    <property type="entry name" value="Ribosomal_uS13-like_H2TH"/>
</dbReference>
<dbReference type="InterPro" id="IPR019980">
    <property type="entry name" value="Ribosomal_uS13_bac-type"/>
</dbReference>
<dbReference type="InterPro" id="IPR018269">
    <property type="entry name" value="Ribosomal_uS13_CS"/>
</dbReference>
<dbReference type="NCBIfam" id="TIGR03631">
    <property type="entry name" value="uS13_bact"/>
    <property type="match status" value="1"/>
</dbReference>
<dbReference type="PANTHER" id="PTHR10871">
    <property type="entry name" value="30S RIBOSOMAL PROTEIN S13/40S RIBOSOMAL PROTEIN S18"/>
    <property type="match status" value="1"/>
</dbReference>
<dbReference type="PANTHER" id="PTHR10871:SF1">
    <property type="entry name" value="SMALL RIBOSOMAL SUBUNIT PROTEIN US13M"/>
    <property type="match status" value="1"/>
</dbReference>
<dbReference type="Pfam" id="PF00416">
    <property type="entry name" value="Ribosomal_S13"/>
    <property type="match status" value="1"/>
</dbReference>
<dbReference type="PIRSF" id="PIRSF002134">
    <property type="entry name" value="Ribosomal_S13"/>
    <property type="match status" value="1"/>
</dbReference>
<dbReference type="SUPFAM" id="SSF46946">
    <property type="entry name" value="S13-like H2TH domain"/>
    <property type="match status" value="1"/>
</dbReference>
<dbReference type="PROSITE" id="PS00646">
    <property type="entry name" value="RIBOSOMAL_S13_1"/>
    <property type="match status" value="1"/>
</dbReference>
<dbReference type="PROSITE" id="PS50159">
    <property type="entry name" value="RIBOSOMAL_S13_2"/>
    <property type="match status" value="1"/>
</dbReference>
<gene>
    <name evidence="1" type="primary">rpsM</name>
    <name type="ordered locus">Bcenmc03_0350</name>
</gene>
<evidence type="ECO:0000255" key="1">
    <source>
        <dbReference type="HAMAP-Rule" id="MF_01315"/>
    </source>
</evidence>
<evidence type="ECO:0000256" key="2">
    <source>
        <dbReference type="SAM" id="MobiDB-lite"/>
    </source>
</evidence>
<evidence type="ECO:0000305" key="3"/>
<sequence length="121" mass="13610">MARIAGVNIPNHQHTEIGLTAIFGVGRTRSRSICVAAGVDFSKKVKDLTDADLEKLREEVGKFVVEGDLRREVTMNIKRLMDLGCYRGVRHRKGLPMRGQRTRTNARTRKGPRRAAQALKK</sequence>
<organism>
    <name type="scientific">Burkholderia orbicola (strain MC0-3)</name>
    <dbReference type="NCBI Taxonomy" id="406425"/>
    <lineage>
        <taxon>Bacteria</taxon>
        <taxon>Pseudomonadati</taxon>
        <taxon>Pseudomonadota</taxon>
        <taxon>Betaproteobacteria</taxon>
        <taxon>Burkholderiales</taxon>
        <taxon>Burkholderiaceae</taxon>
        <taxon>Burkholderia</taxon>
        <taxon>Burkholderia cepacia complex</taxon>
        <taxon>Burkholderia orbicola</taxon>
    </lineage>
</organism>
<proteinExistence type="inferred from homology"/>